<gene>
    <name evidence="5" type="primary">StuA</name>
    <name type="ORF">FGRAMPH1_01T07355</name>
    <name type="ORF">FGRRES_10129</name>
    <name type="ORF">FGSG_10129</name>
</gene>
<protein>
    <recommendedName>
        <fullName evidence="6">Cell pattern formation-associated protein StuA</fullName>
    </recommendedName>
    <alternativeName>
        <fullName evidence="1">Stunted protein A</fullName>
    </alternativeName>
</protein>
<feature type="chain" id="PRO_0000435975" description="Cell pattern formation-associated protein StuA">
    <location>
        <begin position="1"/>
        <end position="699"/>
    </location>
</feature>
<feature type="domain" description="HTH APSES-type" evidence="2">
    <location>
        <begin position="226"/>
        <end position="332"/>
    </location>
</feature>
<feature type="DNA-binding region" description="H-T-H motif" evidence="2">
    <location>
        <begin position="260"/>
        <end position="281"/>
    </location>
</feature>
<feature type="region of interest" description="Disordered" evidence="3">
    <location>
        <begin position="1"/>
        <end position="20"/>
    </location>
</feature>
<feature type="region of interest" description="Disordered" evidence="3">
    <location>
        <begin position="31"/>
        <end position="97"/>
    </location>
</feature>
<feature type="region of interest" description="Disordered" evidence="3">
    <location>
        <begin position="372"/>
        <end position="594"/>
    </location>
</feature>
<feature type="region of interest" description="Disordered" evidence="3">
    <location>
        <begin position="599"/>
        <end position="618"/>
    </location>
</feature>
<feature type="region of interest" description="Nuclear localization domain" evidence="1">
    <location>
        <begin position="669"/>
        <end position="695"/>
    </location>
</feature>
<feature type="region of interest" description="Disordered" evidence="3">
    <location>
        <begin position="674"/>
        <end position="699"/>
    </location>
</feature>
<feature type="compositionally biased region" description="Low complexity" evidence="3">
    <location>
        <begin position="32"/>
        <end position="49"/>
    </location>
</feature>
<feature type="compositionally biased region" description="Polar residues" evidence="3">
    <location>
        <begin position="52"/>
        <end position="61"/>
    </location>
</feature>
<feature type="compositionally biased region" description="Acidic residues" evidence="3">
    <location>
        <begin position="75"/>
        <end position="84"/>
    </location>
</feature>
<feature type="compositionally biased region" description="Polar residues" evidence="3">
    <location>
        <begin position="376"/>
        <end position="423"/>
    </location>
</feature>
<feature type="compositionally biased region" description="Basic and acidic residues" evidence="3">
    <location>
        <begin position="428"/>
        <end position="438"/>
    </location>
</feature>
<feature type="compositionally biased region" description="Basic and acidic residues" evidence="3">
    <location>
        <begin position="478"/>
        <end position="491"/>
    </location>
</feature>
<feature type="compositionally biased region" description="Polar residues" evidence="3">
    <location>
        <begin position="520"/>
        <end position="529"/>
    </location>
</feature>
<feature type="compositionally biased region" description="Basic and acidic residues" evidence="3">
    <location>
        <begin position="535"/>
        <end position="545"/>
    </location>
</feature>
<feature type="compositionally biased region" description="Polar residues" evidence="3">
    <location>
        <begin position="566"/>
        <end position="594"/>
    </location>
</feature>
<organism>
    <name type="scientific">Gibberella zeae (strain ATCC MYA-4620 / CBS 123657 / FGSC 9075 / NRRL 31084 / PH-1)</name>
    <name type="common">Wheat head blight fungus</name>
    <name type="synonym">Fusarium graminearum</name>
    <dbReference type="NCBI Taxonomy" id="229533"/>
    <lineage>
        <taxon>Eukaryota</taxon>
        <taxon>Fungi</taxon>
        <taxon>Dikarya</taxon>
        <taxon>Ascomycota</taxon>
        <taxon>Pezizomycotina</taxon>
        <taxon>Sordariomycetes</taxon>
        <taxon>Hypocreomycetidae</taxon>
        <taxon>Hypocreales</taxon>
        <taxon>Nectriaceae</taxon>
        <taxon>Fusarium</taxon>
    </lineage>
</organism>
<evidence type="ECO:0000250" key="1">
    <source>
        <dbReference type="UniProtKB" id="P36011"/>
    </source>
</evidence>
<evidence type="ECO:0000255" key="2">
    <source>
        <dbReference type="PROSITE-ProRule" id="PRU00630"/>
    </source>
</evidence>
<evidence type="ECO:0000256" key="3">
    <source>
        <dbReference type="SAM" id="MobiDB-lite"/>
    </source>
</evidence>
<evidence type="ECO:0000269" key="4">
    <source>
    </source>
</evidence>
<evidence type="ECO:0000303" key="5">
    <source>
    </source>
</evidence>
<evidence type="ECO:0000305" key="6"/>
<comment type="function">
    <text evidence="4">Transcription factor that regulates asexual reproduction (PubMed:20879840). Binds the StuA-response elements (StRE) with the consensus sequence 5'-(A/T)CGCG(T/A)N(A/C)-3' at the promoters of target genes (PubMed:20879840). Controls the expression of the gene clusters involved in the production of deoxynivalenol (DON) and 15-acetyldeoxynivalenol (15ADON) (PubMed:20879840). Regulates the expression of genes involved in chitin and glucan metabolism (PubMed:20879840). Also controls catalase activity and cell surface hydrophobicity (PubMed:20879840). Plays an important role in pathogenicity (PubMed:20879840).</text>
</comment>
<comment type="subcellular location">
    <subcellularLocation>
        <location evidence="1">Nucleus</location>
    </subcellularLocation>
</comment>
<comment type="disruption phenotype">
    <text evidence="4">Does not develop perithecia and sexual ascospores, and lacks conidiophores and phialides (PubMed:20879840). Greatly reduces pathogenicity on wheat heads and production of secondary metabolites such as deoxynivalenol (DON) and 15-acetyldeoxynivalenol (15ADON) (PubMed:20879840). Leads to up-regulation of cell-cycle genes which promoters are highly enriched in StuA-response elements (StRE) (PubMed:20879840).</text>
</comment>
<comment type="similarity">
    <text evidence="6">Belongs to the EFG1/PHD1/stuA family.</text>
</comment>
<name>STUA_GIBZE</name>
<dbReference type="EMBL" id="DS231669">
    <property type="protein sequence ID" value="ESU16805.1"/>
    <property type="molecule type" value="Genomic_DNA"/>
</dbReference>
<dbReference type="EMBL" id="HG970332">
    <property type="protein sequence ID" value="SCB64555.1"/>
    <property type="molecule type" value="Genomic_DNA"/>
</dbReference>
<dbReference type="RefSeq" id="XP_011319067.1">
    <property type="nucleotide sequence ID" value="XM_011320765.1"/>
</dbReference>
<dbReference type="SMR" id="I1S0A8"/>
<dbReference type="STRING" id="229533.I1S0A8"/>
<dbReference type="GeneID" id="23557049"/>
<dbReference type="KEGG" id="fgr:FGSG_10129"/>
<dbReference type="VEuPathDB" id="FungiDB:FGRAMPH1_01G07355"/>
<dbReference type="eggNOG" id="ENOG502QW2C">
    <property type="taxonomic scope" value="Eukaryota"/>
</dbReference>
<dbReference type="HOGENOM" id="CLU_016460_0_0_1"/>
<dbReference type="InParanoid" id="I1S0A8"/>
<dbReference type="OrthoDB" id="56448at110618"/>
<dbReference type="PHI-base" id="PHI:1290"/>
<dbReference type="PHI-base" id="PHI:1295"/>
<dbReference type="Proteomes" id="UP000070720">
    <property type="component" value="Chromosome 1"/>
</dbReference>
<dbReference type="GO" id="GO:0005634">
    <property type="term" value="C:nucleus"/>
    <property type="evidence" value="ECO:0007669"/>
    <property type="project" value="UniProtKB-SubCell"/>
</dbReference>
<dbReference type="GO" id="GO:0003700">
    <property type="term" value="F:DNA-binding transcription factor activity"/>
    <property type="evidence" value="ECO:0007669"/>
    <property type="project" value="TreeGrafter"/>
</dbReference>
<dbReference type="GO" id="GO:0043565">
    <property type="term" value="F:sequence-specific DNA binding"/>
    <property type="evidence" value="ECO:0007669"/>
    <property type="project" value="TreeGrafter"/>
</dbReference>
<dbReference type="GO" id="GO:0048315">
    <property type="term" value="P:conidium formation"/>
    <property type="evidence" value="ECO:0007669"/>
    <property type="project" value="UniProtKB-KW"/>
</dbReference>
<dbReference type="GO" id="GO:0045944">
    <property type="term" value="P:positive regulation of transcription by RNA polymerase II"/>
    <property type="evidence" value="ECO:0007669"/>
    <property type="project" value="TreeGrafter"/>
</dbReference>
<dbReference type="GO" id="GO:0030435">
    <property type="term" value="P:sporulation resulting in formation of a cellular spore"/>
    <property type="evidence" value="ECO:0007669"/>
    <property type="project" value="UniProtKB-KW"/>
</dbReference>
<dbReference type="FunFam" id="3.10.260.10:FF:000003">
    <property type="entry name" value="Ascospore maturation 1 protein"/>
    <property type="match status" value="1"/>
</dbReference>
<dbReference type="Gene3D" id="3.10.260.10">
    <property type="entry name" value="Transcription regulator HTH, APSES-type DNA-binding domain"/>
    <property type="match status" value="1"/>
</dbReference>
<dbReference type="InterPro" id="IPR029790">
    <property type="entry name" value="EFG1/Phd1/StuA"/>
</dbReference>
<dbReference type="InterPro" id="IPR036887">
    <property type="entry name" value="HTH_APSES_sf"/>
</dbReference>
<dbReference type="InterPro" id="IPR018004">
    <property type="entry name" value="KilA/APSES_HTH"/>
</dbReference>
<dbReference type="InterPro" id="IPR003163">
    <property type="entry name" value="Tscrpt_reg_HTH_APSES-type"/>
</dbReference>
<dbReference type="PANTHER" id="PTHR47792">
    <property type="entry name" value="PROTEIN SOK2-RELATED"/>
    <property type="match status" value="1"/>
</dbReference>
<dbReference type="PANTHER" id="PTHR47792:SF1">
    <property type="entry name" value="PROTEIN SOK2-RELATED"/>
    <property type="match status" value="1"/>
</dbReference>
<dbReference type="Pfam" id="PF04383">
    <property type="entry name" value="KilA-N"/>
    <property type="match status" value="1"/>
</dbReference>
<dbReference type="SMART" id="SM01252">
    <property type="entry name" value="KilA-N"/>
    <property type="match status" value="1"/>
</dbReference>
<dbReference type="SUPFAM" id="SSF54616">
    <property type="entry name" value="DNA-binding domain of Mlu1-box binding protein MBP1"/>
    <property type="match status" value="1"/>
</dbReference>
<dbReference type="PROSITE" id="PS51299">
    <property type="entry name" value="HTH_APSES"/>
    <property type="match status" value="1"/>
</dbReference>
<reference key="1">
    <citation type="journal article" date="2007" name="Science">
        <title>The Fusarium graminearum genome reveals a link between localized polymorphism and pathogen specialization.</title>
        <authorList>
            <person name="Cuomo C.A."/>
            <person name="Gueldener U."/>
            <person name="Xu J.-R."/>
            <person name="Trail F."/>
            <person name="Turgeon B.G."/>
            <person name="Di Pietro A."/>
            <person name="Walton J.D."/>
            <person name="Ma L.-J."/>
            <person name="Baker S.E."/>
            <person name="Rep M."/>
            <person name="Adam G."/>
            <person name="Antoniw J."/>
            <person name="Baldwin T."/>
            <person name="Calvo S.E."/>
            <person name="Chang Y.-L."/>
            <person name="DeCaprio D."/>
            <person name="Gale L.R."/>
            <person name="Gnerre S."/>
            <person name="Goswami R.S."/>
            <person name="Hammond-Kosack K."/>
            <person name="Harris L.J."/>
            <person name="Hilburn K."/>
            <person name="Kennell J.C."/>
            <person name="Kroken S."/>
            <person name="Magnuson J.K."/>
            <person name="Mannhaupt G."/>
            <person name="Mauceli E.W."/>
            <person name="Mewes H.-W."/>
            <person name="Mitterbauer R."/>
            <person name="Muehlbauer G."/>
            <person name="Muensterkoetter M."/>
            <person name="Nelson D."/>
            <person name="O'Donnell K."/>
            <person name="Ouellet T."/>
            <person name="Qi W."/>
            <person name="Quesneville H."/>
            <person name="Roncero M.I.G."/>
            <person name="Seong K.-Y."/>
            <person name="Tetko I.V."/>
            <person name="Urban M."/>
            <person name="Waalwijk C."/>
            <person name="Ward T.J."/>
            <person name="Yao J."/>
            <person name="Birren B.W."/>
            <person name="Kistler H.C."/>
        </authorList>
    </citation>
    <scope>NUCLEOTIDE SEQUENCE [LARGE SCALE GENOMIC DNA]</scope>
    <source>
        <strain>ATCC MYA-4620 / CBS 123657 / FGSC 9075 / NRRL 31084 / PH-1</strain>
    </source>
</reference>
<reference key="2">
    <citation type="journal article" date="2010" name="Nature">
        <title>Comparative genomics reveals mobile pathogenicity chromosomes in Fusarium.</title>
        <authorList>
            <person name="Ma L.-J."/>
            <person name="van der Does H.C."/>
            <person name="Borkovich K.A."/>
            <person name="Coleman J.J."/>
            <person name="Daboussi M.-J."/>
            <person name="Di Pietro A."/>
            <person name="Dufresne M."/>
            <person name="Freitag M."/>
            <person name="Grabherr M."/>
            <person name="Henrissat B."/>
            <person name="Houterman P.M."/>
            <person name="Kang S."/>
            <person name="Shim W.-B."/>
            <person name="Woloshuk C."/>
            <person name="Xie X."/>
            <person name="Xu J.-R."/>
            <person name="Antoniw J."/>
            <person name="Baker S.E."/>
            <person name="Bluhm B.H."/>
            <person name="Breakspear A."/>
            <person name="Brown D.W."/>
            <person name="Butchko R.A.E."/>
            <person name="Chapman S."/>
            <person name="Coulson R."/>
            <person name="Coutinho P.M."/>
            <person name="Danchin E.G.J."/>
            <person name="Diener A."/>
            <person name="Gale L.R."/>
            <person name="Gardiner D.M."/>
            <person name="Goff S."/>
            <person name="Hammond-Kosack K.E."/>
            <person name="Hilburn K."/>
            <person name="Hua-Van A."/>
            <person name="Jonkers W."/>
            <person name="Kazan K."/>
            <person name="Kodira C.D."/>
            <person name="Koehrsen M."/>
            <person name="Kumar L."/>
            <person name="Lee Y.-H."/>
            <person name="Li L."/>
            <person name="Manners J.M."/>
            <person name="Miranda-Saavedra D."/>
            <person name="Mukherjee M."/>
            <person name="Park G."/>
            <person name="Park J."/>
            <person name="Park S.-Y."/>
            <person name="Proctor R.H."/>
            <person name="Regev A."/>
            <person name="Ruiz-Roldan M.C."/>
            <person name="Sain D."/>
            <person name="Sakthikumar S."/>
            <person name="Sykes S."/>
            <person name="Schwartz D.C."/>
            <person name="Turgeon B.G."/>
            <person name="Wapinski I."/>
            <person name="Yoder O."/>
            <person name="Young S."/>
            <person name="Zeng Q."/>
            <person name="Zhou S."/>
            <person name="Galagan J."/>
            <person name="Cuomo C.A."/>
            <person name="Kistler H.C."/>
            <person name="Rep M."/>
        </authorList>
    </citation>
    <scope>GENOME REANNOTATION</scope>
    <source>
        <strain>ATCC MYA-4620 / CBS 123657 / FGSC 9075 / NRRL 31084 / PH-1</strain>
    </source>
</reference>
<reference key="3">
    <citation type="journal article" date="2015" name="BMC Genomics">
        <title>The completed genome sequence of the pathogenic ascomycete fungus Fusarium graminearum.</title>
        <authorList>
            <person name="King R."/>
            <person name="Urban M."/>
            <person name="Hammond-Kosack M.C.U."/>
            <person name="Hassani-Pak K."/>
            <person name="Hammond-Kosack K.E."/>
        </authorList>
    </citation>
    <scope>NUCLEOTIDE SEQUENCE [LARGE SCALE GENOMIC DNA]</scope>
    <source>
        <strain>ATCC MYA-4620 / CBS 123657 / FGSC 9075 / NRRL 31084 / PH-1</strain>
    </source>
</reference>
<reference key="4">
    <citation type="journal article" date="2011" name="Mol. Plant Microbe Interact.">
        <title>The transcription factor FgStuAp influences spore development, pathogenicity, and secondary metabolism in Fusarium graminearum.</title>
        <authorList>
            <person name="Lysoee E."/>
            <person name="Pasquali M."/>
            <person name="Breakspear A."/>
            <person name="Kistler H.C."/>
        </authorList>
    </citation>
    <scope>FUNCTION</scope>
    <scope>DISRUPTION PHENOTYPE</scope>
</reference>
<keyword id="KW-0183">Conidiation</keyword>
<keyword id="KW-0238">DNA-binding</keyword>
<keyword id="KW-0539">Nucleus</keyword>
<keyword id="KW-1185">Reference proteome</keyword>
<keyword id="KW-0749">Sporulation</keyword>
<keyword id="KW-0804">Transcription</keyword>
<keyword id="KW-0805">Transcription regulation</keyword>
<keyword id="KW-0843">Virulence</keyword>
<accession>I1S0A8</accession>
<accession>A0A098DAM9</accession>
<accession>A0A1C3YJG6</accession>
<proteinExistence type="inferred from homology"/>
<sequence>MDGTPSSGPPRVEAPHLLAPLQTHSQLVALTPQFKSQQSQPQSQSQYPSLINPDSYSSSSPYRLDCGAGIGQGIEDGEDYDQEESNCVTNPEPQPEHQHQYLPQLLDLVADNLEQALIVPRIHQHPQSNNCNSPESFHMMNQSHHQQSEMYYPQYPTQQYNPYPYPTNGAHAPAVSTPMPGPQNVLPVPSALSNQGAMPQAAYSNNAPAGNFDTTGQHNPPGMKPRVTATLWEDEGSLCFQVEARGICVARREDNHMINGTKLLNVAGMTRGRRDGILKSEKVRHVVKIGPMHLKGVWIPYDRALDFANKEKITELLYPLFVHNIGALLYHPSNSNRTSQVMAAAERKKNEAIVGNRSLPSLVQSHHQMMPAMPTGYTSQQPLTNGHQSMANTPQPLTNGSQPPMNGSQTPMNGPQPPMQNGGSMLKRVREDDDDLHRSGPNGHDPMNNIHGMPNGYPHQSPLGSVHQPPMQNGNDGGLKRGREEHDDMHRAGPNGHDPMNNMPGGMPSLPNYAPPPLQNLHQPLSNGDSGMLKRGRDDDDDVHRSSPNGHDANGNFELKRRKTETSTSNDMLPQSPYYTLSNGAYQGPMMNSMNHYKRRDDEAETPRPGPNMNDLNNFDLKQRHKTMESSVPAPQYDAMNRPHSSIGNSPAYASAPTGYDHLTRPASTVAVSPSYPAGPGYELARPVTNVPRRQQSFG</sequence>